<evidence type="ECO:0000255" key="1">
    <source>
        <dbReference type="HAMAP-Rule" id="MF_00368"/>
    </source>
</evidence>
<evidence type="ECO:0000305" key="2"/>
<gene>
    <name evidence="1" type="primary">rplL</name>
    <name type="ordered locus">HPSH_06205</name>
</gene>
<proteinExistence type="inferred from homology"/>
<reference key="1">
    <citation type="submission" date="2008-05" db="EMBL/GenBank/DDBJ databases">
        <title>Genome sequence of Helicobacter pylori from the remote Amazon: traces of Asian ancestry of the first Americans.</title>
        <authorList>
            <person name="Kersulyte D."/>
            <person name="Kalia A."/>
            <person name="Gilman R.H."/>
            <person name="Berg D.E."/>
        </authorList>
    </citation>
    <scope>NUCLEOTIDE SEQUENCE [LARGE SCALE GENOMIC DNA]</scope>
    <source>
        <strain>Shi470</strain>
    </source>
</reference>
<protein>
    <recommendedName>
        <fullName evidence="1">Large ribosomal subunit protein bL12</fullName>
    </recommendedName>
    <alternativeName>
        <fullName evidence="2">50S ribosomal protein L7/L12</fullName>
    </alternativeName>
</protein>
<accession>B2UUW1</accession>
<dbReference type="EMBL" id="CP001072">
    <property type="protein sequence ID" value="ACD48643.1"/>
    <property type="molecule type" value="Genomic_DNA"/>
</dbReference>
<dbReference type="RefSeq" id="WP_001018228.1">
    <property type="nucleotide sequence ID" value="NC_010698.2"/>
</dbReference>
<dbReference type="SMR" id="B2UUW1"/>
<dbReference type="GeneID" id="93237673"/>
<dbReference type="KEGG" id="hps:HPSH_06205"/>
<dbReference type="HOGENOM" id="CLU_086499_3_2_7"/>
<dbReference type="GO" id="GO:0022625">
    <property type="term" value="C:cytosolic large ribosomal subunit"/>
    <property type="evidence" value="ECO:0007669"/>
    <property type="project" value="TreeGrafter"/>
</dbReference>
<dbReference type="GO" id="GO:0003729">
    <property type="term" value="F:mRNA binding"/>
    <property type="evidence" value="ECO:0007669"/>
    <property type="project" value="TreeGrafter"/>
</dbReference>
<dbReference type="GO" id="GO:0003735">
    <property type="term" value="F:structural constituent of ribosome"/>
    <property type="evidence" value="ECO:0007669"/>
    <property type="project" value="InterPro"/>
</dbReference>
<dbReference type="GO" id="GO:0006412">
    <property type="term" value="P:translation"/>
    <property type="evidence" value="ECO:0007669"/>
    <property type="project" value="UniProtKB-UniRule"/>
</dbReference>
<dbReference type="CDD" id="cd00387">
    <property type="entry name" value="Ribosomal_L7_L12"/>
    <property type="match status" value="1"/>
</dbReference>
<dbReference type="FunFam" id="1.20.5.710:FF:000004">
    <property type="entry name" value="50S ribosomal protein L7/L12"/>
    <property type="match status" value="1"/>
</dbReference>
<dbReference type="FunFam" id="3.30.1390.10:FF:000001">
    <property type="entry name" value="50S ribosomal protein L7/L12"/>
    <property type="match status" value="1"/>
</dbReference>
<dbReference type="Gene3D" id="3.30.1390.10">
    <property type="match status" value="1"/>
</dbReference>
<dbReference type="Gene3D" id="1.20.5.710">
    <property type="entry name" value="Single helix bin"/>
    <property type="match status" value="1"/>
</dbReference>
<dbReference type="HAMAP" id="MF_00368">
    <property type="entry name" value="Ribosomal_bL12"/>
    <property type="match status" value="1"/>
</dbReference>
<dbReference type="InterPro" id="IPR000206">
    <property type="entry name" value="Ribosomal_bL12"/>
</dbReference>
<dbReference type="InterPro" id="IPR013823">
    <property type="entry name" value="Ribosomal_bL12_C"/>
</dbReference>
<dbReference type="InterPro" id="IPR014719">
    <property type="entry name" value="Ribosomal_bL12_C/ClpS-like"/>
</dbReference>
<dbReference type="InterPro" id="IPR008932">
    <property type="entry name" value="Ribosomal_bL12_oligo"/>
</dbReference>
<dbReference type="InterPro" id="IPR036235">
    <property type="entry name" value="Ribosomal_bL12_oligo_N_sf"/>
</dbReference>
<dbReference type="NCBIfam" id="TIGR00855">
    <property type="entry name" value="L12"/>
    <property type="match status" value="1"/>
</dbReference>
<dbReference type="PANTHER" id="PTHR45987">
    <property type="entry name" value="39S RIBOSOMAL PROTEIN L12"/>
    <property type="match status" value="1"/>
</dbReference>
<dbReference type="PANTHER" id="PTHR45987:SF4">
    <property type="entry name" value="LARGE RIBOSOMAL SUBUNIT PROTEIN BL12M"/>
    <property type="match status" value="1"/>
</dbReference>
<dbReference type="Pfam" id="PF00542">
    <property type="entry name" value="Ribosomal_L12"/>
    <property type="match status" value="1"/>
</dbReference>
<dbReference type="Pfam" id="PF16320">
    <property type="entry name" value="Ribosomal_L12_N"/>
    <property type="match status" value="1"/>
</dbReference>
<dbReference type="SUPFAM" id="SSF54736">
    <property type="entry name" value="ClpS-like"/>
    <property type="match status" value="1"/>
</dbReference>
<dbReference type="SUPFAM" id="SSF48300">
    <property type="entry name" value="Ribosomal protein L7/12, oligomerisation (N-terminal) domain"/>
    <property type="match status" value="1"/>
</dbReference>
<name>RL7_HELPS</name>
<sequence>MAISKEEVLEYIGSLSVLELSELVKMFEEKFGVSATPTVVAGAAVAGGAAAESEEKTEFNVILADSGAEKIKVIKVVREITGLGLKEAKDATEKTPHVLKEGVNKEEAETIKKKLEEVGAKVEVK</sequence>
<comment type="function">
    <text evidence="1">Forms part of the ribosomal stalk which helps the ribosome interact with GTP-bound translation factors. Is thus essential for accurate translation.</text>
</comment>
<comment type="subunit">
    <text evidence="1">Homodimer. Part of the ribosomal stalk of the 50S ribosomal subunit. Forms a multimeric L10(L12)X complex, where L10 forms an elongated spine to which 2 to 4 L12 dimers bind in a sequential fashion. Binds GTP-bound translation factors.</text>
</comment>
<comment type="similarity">
    <text evidence="1">Belongs to the bacterial ribosomal protein bL12 family.</text>
</comment>
<feature type="chain" id="PRO_1000121447" description="Large ribosomal subunit protein bL12">
    <location>
        <begin position="1"/>
        <end position="125"/>
    </location>
</feature>
<keyword id="KW-0687">Ribonucleoprotein</keyword>
<keyword id="KW-0689">Ribosomal protein</keyword>
<organism>
    <name type="scientific">Helicobacter pylori (strain Shi470)</name>
    <dbReference type="NCBI Taxonomy" id="512562"/>
    <lineage>
        <taxon>Bacteria</taxon>
        <taxon>Pseudomonadati</taxon>
        <taxon>Campylobacterota</taxon>
        <taxon>Epsilonproteobacteria</taxon>
        <taxon>Campylobacterales</taxon>
        <taxon>Helicobacteraceae</taxon>
        <taxon>Helicobacter</taxon>
    </lineage>
</organism>